<dbReference type="EMBL" id="AY961463">
    <property type="protein sequence ID" value="AAY43409.1"/>
    <property type="molecule type" value="mRNA"/>
</dbReference>
<dbReference type="GlyCosmos" id="Q2M3Z8">
    <property type="glycosylation" value="1 site, No reported glycans"/>
</dbReference>
<dbReference type="VEuPathDB" id="FungiDB:PITG_14309"/>
<dbReference type="GO" id="GO:0005576">
    <property type="term" value="C:extracellular region"/>
    <property type="evidence" value="ECO:0007669"/>
    <property type="project" value="UniProtKB-SubCell"/>
</dbReference>
<dbReference type="GO" id="GO:0042025">
    <property type="term" value="C:host cell nucleus"/>
    <property type="evidence" value="ECO:0007669"/>
    <property type="project" value="UniProtKB-SubCell"/>
</dbReference>
<dbReference type="InterPro" id="IPR052980">
    <property type="entry name" value="Crinkler_effector"/>
</dbReference>
<dbReference type="InterPro" id="IPR045379">
    <property type="entry name" value="Crinkler_N"/>
</dbReference>
<dbReference type="InterPro" id="IPR027417">
    <property type="entry name" value="P-loop_NTPase"/>
</dbReference>
<dbReference type="PANTHER" id="PTHR33129:SF3">
    <property type="entry name" value="HOT SPOT (RHS) PROTEIN, PUTATIVE-RELATED"/>
    <property type="match status" value="1"/>
</dbReference>
<dbReference type="PANTHER" id="PTHR33129">
    <property type="entry name" value="PROTEIN KINASE DOMAIN-CONTAINING PROTEIN-RELATED"/>
    <property type="match status" value="1"/>
</dbReference>
<dbReference type="Pfam" id="PF20147">
    <property type="entry name" value="Crinkler"/>
    <property type="match status" value="1"/>
</dbReference>
<dbReference type="SUPFAM" id="SSF52540">
    <property type="entry name" value="P-loop containing nucleoside triphosphate hydrolases"/>
    <property type="match status" value="1"/>
</dbReference>
<gene>
    <name evidence="4" type="primary">CRN15</name>
</gene>
<name>CRN15_PHYIN</name>
<sequence>MVKLVCAIVGVAGSAFPVDIDASQLVGDLKKAIKAENAMTFTGDAKDLQLFLAKQPVDDESGKEVVPVYRPSAEEMKEESFKWLPDEHRAALKLVEGESDDYIHALTAGEPILGSKTLTTWFYTKNNMELPSSEQIHVLVVVPEQGSSVPTVSQDGVFDHCINPFFLQFRTVDKVGDWLEFSSLLPLTRRQKLYIRSSYQVIANHALFNPNVGMVKYAVVTGTPGVGKSVFVYYVLWRLIKEKKRVLLFDNNGLFYFDGSTMLICLALPSKFNEQFWSPDLWCLVDSMDPTSIPGLPYRLCSVLLASTPRRDCIGEFKKQPPTADVFYMPLWSKEELATIAPMYPHAAAVWENRFDCLGGVPRLVLQDIETDPQALLMSACSSCSLDDCIMLVSIYSEINSKTKIVQTLIHIHSQEPYRKYKVVYASDLAMQLIVRTKWRFDRAKLQSLLGSSDGNPLAQSLCGYIFEFYSMDRLEQGGTFVYRELFSGKRKRTPADGTIDIPRSSQPRQVAERVEVGQHAKQLYVPGTSNYTAIDAWMPQFGGFQMTVGKTHDIKGGAADDLAKLGQNGNRLFFLLPPLYYKTFTKKTPQTIKQYAILVPYPEVRNELSASTLQ</sequence>
<keyword id="KW-0325">Glycoprotein</keyword>
<keyword id="KW-1048">Host nucleus</keyword>
<keyword id="KW-0964">Secreted</keyword>
<keyword id="KW-0732">Signal</keyword>
<keyword id="KW-0843">Virulence</keyword>
<evidence type="ECO:0000255" key="1"/>
<evidence type="ECO:0000255" key="2">
    <source>
        <dbReference type="PROSITE-ProRule" id="PRU00498"/>
    </source>
</evidence>
<evidence type="ECO:0000269" key="3">
    <source>
    </source>
</evidence>
<evidence type="ECO:0000303" key="4">
    <source>
    </source>
</evidence>
<evidence type="ECO:0000305" key="5"/>
<evidence type="ECO:0000305" key="6">
    <source>
    </source>
</evidence>
<proteinExistence type="evidence at transcript level"/>
<reference key="1">
    <citation type="journal article" date="2006" name="Fungal Genet. Biol.">
        <title>Computational and comparative analyses of 150 full-length cDNA sequences from the oomycete plant pathogen Phytophthora infestans.</title>
        <authorList>
            <person name="Win J."/>
            <person name="Kanneganti T.D."/>
            <person name="Torto-Alalibo T."/>
            <person name="Kamoun S."/>
        </authorList>
    </citation>
    <scope>NUCLEOTIDE SEQUENCE [MRNA]</scope>
    <source>
        <strain>Isolate 88069</strain>
    </source>
</reference>
<reference key="2">
    <citation type="journal article" date="2010" name="Proc. Natl. Acad. Sci. U.S.A.">
        <title>Ancient class of translocated oomycete effectors targets the host nucleus.</title>
        <authorList>
            <person name="Schornack S."/>
            <person name="van Damme M."/>
            <person name="Bozkurt T.O."/>
            <person name="Cano L.M."/>
            <person name="Smoker M."/>
            <person name="Thines M."/>
            <person name="Gaulin E."/>
            <person name="Kamoun S."/>
            <person name="Huitema E."/>
        </authorList>
    </citation>
    <scope>DOMAIN</scope>
    <scope>SUBCELLULAR LOCATION</scope>
</reference>
<feature type="signal peptide" evidence="1">
    <location>
        <begin position="1"/>
        <end position="17"/>
    </location>
</feature>
<feature type="chain" id="PRO_0000447410" description="Crinkler effector protein 15">
    <location>
        <begin position="18"/>
        <end position="615"/>
    </location>
</feature>
<feature type="region of interest" description="LQLFLAK domain" evidence="6">
    <location>
        <begin position="18"/>
        <end position="54"/>
    </location>
</feature>
<feature type="region of interest" description="DWL domain" evidence="6">
    <location>
        <begin position="55"/>
        <end position="136"/>
    </location>
</feature>
<feature type="short sequence motif" description="HVLVXXP motif" evidence="6">
    <location>
        <begin position="137"/>
        <end position="143"/>
    </location>
</feature>
<feature type="glycosylation site" description="N-linked (GlcNAc...) asparagine" evidence="2">
    <location>
        <position position="531"/>
    </location>
</feature>
<organism>
    <name type="scientific">Phytophthora infestans</name>
    <name type="common">Potato late blight agent</name>
    <name type="synonym">Botrytis infestans</name>
    <dbReference type="NCBI Taxonomy" id="4787"/>
    <lineage>
        <taxon>Eukaryota</taxon>
        <taxon>Sar</taxon>
        <taxon>Stramenopiles</taxon>
        <taxon>Oomycota</taxon>
        <taxon>Peronosporales</taxon>
        <taxon>Peronosporaceae</taxon>
        <taxon>Phytophthora</taxon>
    </lineage>
</organism>
<protein>
    <recommendedName>
        <fullName evidence="4">Crinkler effector protein 15</fullName>
    </recommendedName>
</protein>
<accession>Q2M3Z8</accession>
<comment type="function">
    <text evidence="6">Secreted effector that elicits necrosis in host plants, a characteristic of plant innate immunity.</text>
</comment>
<comment type="subcellular location">
    <subcellularLocation>
        <location evidence="3">Secreted</location>
    </subcellularLocation>
    <subcellularLocation>
        <location evidence="3">Host nucleus</location>
    </subcellularLocation>
</comment>
<comment type="domain">
    <text evidence="3">The CRN proteins have modular architectures that include a signal peptide, a conserved N-terminus, and highly diverse C-terminal domains. The conserved CRN N-terminus harbors a distinct LXLFLAK motif, which is followed by the conserved DWL domain. A highly conserved HVLVXXP motif marks the end of the CRN N-terminal domains and forms a junction where diverse C-terminal domains are fused. The conserved CRN N-terminus mediates the translocation into the plant host cells.</text>
</comment>
<comment type="similarity">
    <text evidence="5">Belongs to the Crinkler effector family.</text>
</comment>